<feature type="chain" id="PRO_0000140814" description="Bifunctional 3-dehydroquinate synthase/phosphatase">
    <location>
        <begin position="1"/>
        <end position="664"/>
    </location>
</feature>
<feature type="region of interest" description="3-dehydroquinate synthase">
    <location>
        <begin position="1"/>
        <end position="352"/>
    </location>
</feature>
<feature type="region of interest" description="GPPA/PPX">
    <location>
        <begin position="353"/>
        <end position="664"/>
    </location>
</feature>
<feature type="binding site" evidence="2">
    <location>
        <begin position="61"/>
        <end position="66"/>
    </location>
    <ligand>
        <name>NAD(+)</name>
        <dbReference type="ChEBI" id="CHEBI:57540"/>
    </ligand>
</feature>
<feature type="binding site" evidence="2">
    <location>
        <begin position="95"/>
        <end position="99"/>
    </location>
    <ligand>
        <name>NAD(+)</name>
        <dbReference type="ChEBI" id="CHEBI:57540"/>
    </ligand>
</feature>
<feature type="binding site" evidence="2">
    <location>
        <begin position="119"/>
        <end position="120"/>
    </location>
    <ligand>
        <name>NAD(+)</name>
        <dbReference type="ChEBI" id="CHEBI:57540"/>
    </ligand>
</feature>
<feature type="binding site" evidence="2">
    <location>
        <position position="132"/>
    </location>
    <ligand>
        <name>NAD(+)</name>
        <dbReference type="ChEBI" id="CHEBI:57540"/>
    </ligand>
</feature>
<feature type="binding site" evidence="2">
    <location>
        <position position="141"/>
    </location>
    <ligand>
        <name>NAD(+)</name>
        <dbReference type="ChEBI" id="CHEBI:57540"/>
    </ligand>
</feature>
<feature type="binding site" evidence="2">
    <location>
        <begin position="159"/>
        <end position="162"/>
    </location>
    <ligand>
        <name>NAD(+)</name>
        <dbReference type="ChEBI" id="CHEBI:57540"/>
    </ligand>
</feature>
<feature type="binding site" evidence="2">
    <location>
        <position position="174"/>
    </location>
    <ligand>
        <name>Zn(2+)</name>
        <dbReference type="ChEBI" id="CHEBI:29105"/>
    </ligand>
</feature>
<feature type="binding site" evidence="2">
    <location>
        <position position="238"/>
    </location>
    <ligand>
        <name>Zn(2+)</name>
        <dbReference type="ChEBI" id="CHEBI:29105"/>
    </ligand>
</feature>
<feature type="binding site" evidence="2">
    <location>
        <position position="255"/>
    </location>
    <ligand>
        <name>Zn(2+)</name>
        <dbReference type="ChEBI" id="CHEBI:29105"/>
    </ligand>
</feature>
<organism>
    <name type="scientific">Fusobacterium nucleatum subsp. nucleatum (strain ATCC 25586 / DSM 15643 / BCRC 10681 / CIP 101130 / JCM 8532 / KCTC 2640 / LMG 13131 / VPI 4355)</name>
    <dbReference type="NCBI Taxonomy" id="190304"/>
    <lineage>
        <taxon>Bacteria</taxon>
        <taxon>Fusobacteriati</taxon>
        <taxon>Fusobacteriota</taxon>
        <taxon>Fusobacteriia</taxon>
        <taxon>Fusobacteriales</taxon>
        <taxon>Fusobacteriaceae</taxon>
        <taxon>Fusobacterium</taxon>
    </lineage>
</organism>
<comment type="catalytic activity">
    <reaction>
        <text>7-phospho-2-dehydro-3-deoxy-D-arabino-heptonate = 3-dehydroquinate + phosphate</text>
        <dbReference type="Rhea" id="RHEA:21968"/>
        <dbReference type="ChEBI" id="CHEBI:32364"/>
        <dbReference type="ChEBI" id="CHEBI:43474"/>
        <dbReference type="ChEBI" id="CHEBI:58394"/>
        <dbReference type="EC" id="4.2.3.4"/>
    </reaction>
</comment>
<comment type="cofactor">
    <cofactor evidence="1">
        <name>NAD(+)</name>
        <dbReference type="ChEBI" id="CHEBI:57540"/>
    </cofactor>
</comment>
<comment type="cofactor">
    <cofactor evidence="1">
        <name>Co(2+)</name>
        <dbReference type="ChEBI" id="CHEBI:48828"/>
    </cofactor>
    <cofactor evidence="1">
        <name>Zn(2+)</name>
        <dbReference type="ChEBI" id="CHEBI:29105"/>
    </cofactor>
    <text evidence="1">Binds 1 divalent metal cation per subunit. Can use either Co(2+) or Zn(2+).</text>
</comment>
<comment type="pathway">
    <text>Metabolic intermediate biosynthesis; chorismate biosynthesis; chorismate from D-erythrose 4-phosphate and phosphoenolpyruvate: step 2/7.</text>
</comment>
<comment type="subunit">
    <text evidence="1">Monomer.</text>
</comment>
<comment type="subcellular location">
    <subcellularLocation>
        <location evidence="1">Cytoplasm</location>
    </subcellularLocation>
</comment>
<comment type="similarity">
    <text evidence="3">In the N-terminal section; belongs to the sugar phosphate cyclases superfamily. Dehydroquinate synthase family.</text>
</comment>
<comment type="similarity">
    <text evidence="3">In the C-terminal section; belongs to the GppA/Ppx family.</text>
</comment>
<gene>
    <name type="primary">aroB</name>
    <name type="ordered locus">FN0871</name>
</gene>
<protein>
    <recommendedName>
        <fullName>Bifunctional 3-dehydroquinate synthase/phosphatase</fullName>
    </recommendedName>
    <domain>
        <recommendedName>
            <fullName>3-dehydroquinate synthase</fullName>
            <ecNumber>4.2.3.4</ecNumber>
        </recommendedName>
    </domain>
    <domain>
        <recommendedName>
            <fullName>Unknown phosphatase</fullName>
            <ecNumber>3.6.1.-</ecNumber>
        </recommendedName>
    </domain>
</protein>
<dbReference type="EC" id="4.2.3.4"/>
<dbReference type="EC" id="3.6.1.-"/>
<dbReference type="EMBL" id="AE009951">
    <property type="protein sequence ID" value="AAL95067.1"/>
    <property type="molecule type" value="Genomic_DNA"/>
</dbReference>
<dbReference type="RefSeq" id="NP_603768.1">
    <property type="nucleotide sequence ID" value="NC_003454.1"/>
</dbReference>
<dbReference type="RefSeq" id="WP_011016717.1">
    <property type="nucleotide sequence ID" value="NZ_OZ209243.1"/>
</dbReference>
<dbReference type="SMR" id="Q8RF47"/>
<dbReference type="FunCoup" id="Q8RF47">
    <property type="interactions" value="332"/>
</dbReference>
<dbReference type="STRING" id="190304.FN0871"/>
<dbReference type="PaxDb" id="190304-FN0871"/>
<dbReference type="EnsemblBacteria" id="AAL95067">
    <property type="protein sequence ID" value="AAL95067"/>
    <property type="gene ID" value="FN0871"/>
</dbReference>
<dbReference type="GeneID" id="79783855"/>
<dbReference type="KEGG" id="fnu:FN0871"/>
<dbReference type="PATRIC" id="fig|190304.8.peg.1433"/>
<dbReference type="eggNOG" id="COG0248">
    <property type="taxonomic scope" value="Bacteria"/>
</dbReference>
<dbReference type="eggNOG" id="COG0337">
    <property type="taxonomic scope" value="Bacteria"/>
</dbReference>
<dbReference type="HOGENOM" id="CLU_025862_0_0_0"/>
<dbReference type="InParanoid" id="Q8RF47"/>
<dbReference type="BioCyc" id="FNUC190304:G1FZS-1454-MONOMER"/>
<dbReference type="UniPathway" id="UPA00053">
    <property type="reaction ID" value="UER00085"/>
</dbReference>
<dbReference type="Proteomes" id="UP000002521">
    <property type="component" value="Chromosome"/>
</dbReference>
<dbReference type="GO" id="GO:0005737">
    <property type="term" value="C:cytoplasm"/>
    <property type="evidence" value="ECO:0007669"/>
    <property type="project" value="UniProtKB-SubCell"/>
</dbReference>
<dbReference type="GO" id="GO:0003856">
    <property type="term" value="F:3-dehydroquinate synthase activity"/>
    <property type="evidence" value="ECO:0000318"/>
    <property type="project" value="GO_Central"/>
</dbReference>
<dbReference type="GO" id="GO:0016787">
    <property type="term" value="F:hydrolase activity"/>
    <property type="evidence" value="ECO:0007669"/>
    <property type="project" value="UniProtKB-KW"/>
</dbReference>
<dbReference type="GO" id="GO:0046872">
    <property type="term" value="F:metal ion binding"/>
    <property type="evidence" value="ECO:0007669"/>
    <property type="project" value="UniProtKB-KW"/>
</dbReference>
<dbReference type="GO" id="GO:0000166">
    <property type="term" value="F:nucleotide binding"/>
    <property type="evidence" value="ECO:0007669"/>
    <property type="project" value="UniProtKB-KW"/>
</dbReference>
<dbReference type="GO" id="GO:0008652">
    <property type="term" value="P:amino acid biosynthetic process"/>
    <property type="evidence" value="ECO:0007669"/>
    <property type="project" value="UniProtKB-KW"/>
</dbReference>
<dbReference type="GO" id="GO:0009073">
    <property type="term" value="P:aromatic amino acid family biosynthetic process"/>
    <property type="evidence" value="ECO:0000318"/>
    <property type="project" value="GO_Central"/>
</dbReference>
<dbReference type="GO" id="GO:0009423">
    <property type="term" value="P:chorismate biosynthetic process"/>
    <property type="evidence" value="ECO:0007669"/>
    <property type="project" value="UniProtKB-UniRule"/>
</dbReference>
<dbReference type="CDD" id="cd24120">
    <property type="entry name" value="ASKHA_NBD_AroB-like"/>
    <property type="match status" value="1"/>
</dbReference>
<dbReference type="CDD" id="cd08195">
    <property type="entry name" value="DHQS"/>
    <property type="match status" value="1"/>
</dbReference>
<dbReference type="FunFam" id="1.20.1090.10:FF:000037">
    <property type="entry name" value="3-dehydroquinate synthase"/>
    <property type="match status" value="1"/>
</dbReference>
<dbReference type="FunFam" id="3.40.50.1970:FF:000007">
    <property type="entry name" value="Pentafunctional AROM polypeptide"/>
    <property type="match status" value="1"/>
</dbReference>
<dbReference type="Gene3D" id="3.30.420.40">
    <property type="match status" value="1"/>
</dbReference>
<dbReference type="Gene3D" id="3.40.50.1970">
    <property type="match status" value="1"/>
</dbReference>
<dbReference type="Gene3D" id="1.20.1090.10">
    <property type="entry name" value="Dehydroquinate synthase-like - alpha domain"/>
    <property type="match status" value="1"/>
</dbReference>
<dbReference type="Gene3D" id="3.30.420.150">
    <property type="entry name" value="Exopolyphosphatase. Domain 2"/>
    <property type="match status" value="1"/>
</dbReference>
<dbReference type="HAMAP" id="MF_00110">
    <property type="entry name" value="DHQ_synthase"/>
    <property type="match status" value="1"/>
</dbReference>
<dbReference type="InterPro" id="IPR043129">
    <property type="entry name" value="ATPase_NBD"/>
</dbReference>
<dbReference type="InterPro" id="IPR050071">
    <property type="entry name" value="Dehydroquinate_synthase"/>
</dbReference>
<dbReference type="InterPro" id="IPR016037">
    <property type="entry name" value="DHQ_synth_AroB"/>
</dbReference>
<dbReference type="InterPro" id="IPR030960">
    <property type="entry name" value="DHQS/DOIS_N"/>
</dbReference>
<dbReference type="InterPro" id="IPR056179">
    <property type="entry name" value="DHQS_C"/>
</dbReference>
<dbReference type="InterPro" id="IPR003695">
    <property type="entry name" value="Ppx_GppA_N"/>
</dbReference>
<dbReference type="NCBIfam" id="TIGR01357">
    <property type="entry name" value="aroB"/>
    <property type="match status" value="1"/>
</dbReference>
<dbReference type="PANTHER" id="PTHR43622">
    <property type="entry name" value="3-DEHYDROQUINATE SYNTHASE"/>
    <property type="match status" value="1"/>
</dbReference>
<dbReference type="PANTHER" id="PTHR43622:SF7">
    <property type="entry name" value="3-DEHYDROQUINATE SYNTHASE, CHLOROPLASTIC"/>
    <property type="match status" value="1"/>
</dbReference>
<dbReference type="Pfam" id="PF01761">
    <property type="entry name" value="DHQ_synthase"/>
    <property type="match status" value="1"/>
</dbReference>
<dbReference type="Pfam" id="PF24621">
    <property type="entry name" value="DHQS_C"/>
    <property type="match status" value="1"/>
</dbReference>
<dbReference type="Pfam" id="PF02541">
    <property type="entry name" value="Ppx-GppA"/>
    <property type="match status" value="1"/>
</dbReference>
<dbReference type="SUPFAM" id="SSF53067">
    <property type="entry name" value="Actin-like ATPase domain"/>
    <property type="match status" value="2"/>
</dbReference>
<dbReference type="SUPFAM" id="SSF56796">
    <property type="entry name" value="Dehydroquinate synthase-like"/>
    <property type="match status" value="1"/>
</dbReference>
<sequence length="664" mass="76592">MKKIFDDIYVGSNIISKLNDYTEDFDKILIFSNETIADLYFEKFKSTLNEKDKVFYFAIKDGEEYKNIESILPVYDFMLENNFSRKSLIISLGGGVICDMGGYISATYMRGIEFIQVPTSLLAQVDASVGGKVAINHPKCKNMIGSFKNPYRVIIDVEFLKTLPKREFKSGMGELLKHSFLTKDKSYLEYIENNVEKIKNLDNEVLENIVEQSIRIKKHYVDIDPFEKGERAFLNLGHTYAHALESFFDYKAYTHGEAVSKGIIFDLELSLLRGQIDKEYLERARNIFKLFDIDTDLIYLPSDKFIPLMRKDKKNSFNKIITILLDSEGHLSKTEVKEDEIVKIIDKYKNNFLRASIDIGTNSCRLLIAEVEKDNENITFKKEIYKDLEIVKLGEDVNKNKFLKEEAIERTLKCLKKYRKIIDKYSIEEKNIICFATSATRDSTNKDYFIKKVFDETKIKINCISGDKEAYINFKGVISSFDRDFKDNILVFDIGGGSTEFTLGNMQGIEKKISLNIGSVRITEKFFLNNKLYNYSEENRIKAKDWVKENLKELEDFKKLNFSLIGVAGTTTTQVSVREKMEVYDSEKIHLSNLTSKEINDNLSLFIKNINKQEIKGLDPKRKDVIIGGTIILKEILDYFGKDFIIVSENDNLMGAILEGVENK</sequence>
<accession>Q8RF47</accession>
<name>AROB_FUSNN</name>
<keyword id="KW-0028">Amino-acid biosynthesis</keyword>
<keyword id="KW-0057">Aromatic amino acid biosynthesis</keyword>
<keyword id="KW-0170">Cobalt</keyword>
<keyword id="KW-0963">Cytoplasm</keyword>
<keyword id="KW-0378">Hydrolase</keyword>
<keyword id="KW-0456">Lyase</keyword>
<keyword id="KW-0479">Metal-binding</keyword>
<keyword id="KW-0511">Multifunctional enzyme</keyword>
<keyword id="KW-0520">NAD</keyword>
<keyword id="KW-0547">Nucleotide-binding</keyword>
<keyword id="KW-1185">Reference proteome</keyword>
<keyword id="KW-0862">Zinc</keyword>
<evidence type="ECO:0000250" key="1"/>
<evidence type="ECO:0000250" key="2">
    <source>
        <dbReference type="UniProtKB" id="P9WPX9"/>
    </source>
</evidence>
<evidence type="ECO:0000305" key="3"/>
<proteinExistence type="inferred from homology"/>
<reference key="1">
    <citation type="journal article" date="2002" name="J. Bacteriol.">
        <title>Genome sequence and analysis of the oral bacterium Fusobacterium nucleatum strain ATCC 25586.</title>
        <authorList>
            <person name="Kapatral V."/>
            <person name="Anderson I."/>
            <person name="Ivanova N."/>
            <person name="Reznik G."/>
            <person name="Los T."/>
            <person name="Lykidis A."/>
            <person name="Bhattacharyya A."/>
            <person name="Bartman A."/>
            <person name="Gardner W."/>
            <person name="Grechkin G."/>
            <person name="Zhu L."/>
            <person name="Vasieva O."/>
            <person name="Chu L."/>
            <person name="Kogan Y."/>
            <person name="Chaga O."/>
            <person name="Goltsman E."/>
            <person name="Bernal A."/>
            <person name="Larsen N."/>
            <person name="D'Souza M."/>
            <person name="Walunas T."/>
            <person name="Pusch G."/>
            <person name="Haselkorn R."/>
            <person name="Fonstein M."/>
            <person name="Kyrpides N.C."/>
            <person name="Overbeek R."/>
        </authorList>
    </citation>
    <scope>NUCLEOTIDE SEQUENCE [LARGE SCALE GENOMIC DNA]</scope>
    <source>
        <strain>ATCC 25586 / DSM 15643 / BCRC 10681 / CIP 101130 / JCM 8532 / KCTC 2640 / LMG 13131 / VPI 4355</strain>
    </source>
</reference>